<feature type="chain" id="PRO_0000445341" description="Indole-3-pyruvate monooxygenase YUCCA4">
    <location>
        <begin position="1"/>
        <end position="439"/>
    </location>
</feature>
<feature type="binding site" evidence="1">
    <location>
        <begin position="49"/>
        <end position="54"/>
    </location>
    <ligand>
        <name>FAD</name>
        <dbReference type="ChEBI" id="CHEBI:57692"/>
    </ligand>
</feature>
<feature type="binding site" evidence="1">
    <location>
        <begin position="226"/>
        <end position="231"/>
    </location>
    <ligand>
        <name>NADP(+)</name>
        <dbReference type="ChEBI" id="CHEBI:58349"/>
    </ligand>
</feature>
<proteinExistence type="evidence at protein level"/>
<comment type="function">
    <text evidence="2">Involved in auxin biosynthesis in anthers.</text>
</comment>
<comment type="catalytic activity">
    <reaction evidence="5">
        <text>indole-3-pyruvate + NADPH + O2 + H(+) = (indol-3-yl)acetate + CO2 + NADP(+) + H2O</text>
        <dbReference type="Rhea" id="RHEA:34331"/>
        <dbReference type="ChEBI" id="CHEBI:15377"/>
        <dbReference type="ChEBI" id="CHEBI:15378"/>
        <dbReference type="ChEBI" id="CHEBI:15379"/>
        <dbReference type="ChEBI" id="CHEBI:16526"/>
        <dbReference type="ChEBI" id="CHEBI:17640"/>
        <dbReference type="ChEBI" id="CHEBI:30854"/>
        <dbReference type="ChEBI" id="CHEBI:57783"/>
        <dbReference type="ChEBI" id="CHEBI:58349"/>
        <dbReference type="EC" id="1.14.13.168"/>
    </reaction>
</comment>
<comment type="cofactor">
    <cofactor evidence="4">
        <name>FAD</name>
        <dbReference type="ChEBI" id="CHEBI:57692"/>
    </cofactor>
</comment>
<comment type="developmental stage">
    <text evidence="2">Highly expressed in anthers at stage 9 of development, before pollen mitotic divisions.</text>
</comment>
<comment type="induction">
    <text evidence="2">Repressed by the transcription factor OSH1 during anther development (PubMed:29915329). Reduction of auxin levels at late stage of anther development, after meiosis of microspore mother cells, is necessary for normal anther dehiscence and seed setting (PubMed:29915329).</text>
</comment>
<comment type="miscellaneous">
    <text evidence="2">Plants overexpressing YUCCA4 are male sterile due to defect in anther dehiscence and mature pollen grain release at anthesis (PubMed:29915329). Plants silencing YUCCA4 do not exhibit any visible phenotype (PubMed:29915329).</text>
</comment>
<comment type="similarity">
    <text evidence="4">Belongs to the FMO family.</text>
</comment>
<gene>
    <name evidence="3" type="primary">YUCCA4</name>
    <name evidence="8" type="ordered locus">Os01g0224700</name>
    <name type="ordered locus">LOC_Os01g12490</name>
    <name evidence="6" type="ORF">P0417G05.39</name>
    <name evidence="7" type="ORF">P0492F05.5</name>
</gene>
<accession>Q9LG41</accession>
<dbReference type="EC" id="1.14.13.168" evidence="5"/>
<dbReference type="EMBL" id="AP002835">
    <property type="protein sequence ID" value="BAB07916.2"/>
    <property type="molecule type" value="Genomic_DNA"/>
</dbReference>
<dbReference type="EMBL" id="AP002902">
    <property type="protein sequence ID" value="BAB32703.1"/>
    <property type="molecule type" value="Genomic_DNA"/>
</dbReference>
<dbReference type="EMBL" id="AP008207">
    <property type="protein sequence ID" value="BAF04369.1"/>
    <property type="molecule type" value="Genomic_DNA"/>
</dbReference>
<dbReference type="EMBL" id="AP014957">
    <property type="protein sequence ID" value="BAS71105.1"/>
    <property type="molecule type" value="Genomic_DNA"/>
</dbReference>
<dbReference type="EMBL" id="AK070386">
    <property type="protein sequence ID" value="BAG91919.1"/>
    <property type="molecule type" value="mRNA"/>
</dbReference>
<dbReference type="SMR" id="Q9LG41"/>
<dbReference type="FunCoup" id="Q9LG41">
    <property type="interactions" value="13"/>
</dbReference>
<dbReference type="STRING" id="39947.Q9LG41"/>
<dbReference type="PaxDb" id="39947-Q9LG41"/>
<dbReference type="EnsemblPlants" id="Os01t0224700-01">
    <property type="protein sequence ID" value="Os01t0224700-01"/>
    <property type="gene ID" value="Os01g0224700"/>
</dbReference>
<dbReference type="GeneID" id="4326734"/>
<dbReference type="Gramene" id="Os01t0224700-01">
    <property type="protein sequence ID" value="Os01t0224700-01"/>
    <property type="gene ID" value="Os01g0224700"/>
</dbReference>
<dbReference type="KEGG" id="dosa:Os01g0224700"/>
<dbReference type="KEGG" id="osa:4326734"/>
<dbReference type="eggNOG" id="KOG1399">
    <property type="taxonomic scope" value="Eukaryota"/>
</dbReference>
<dbReference type="HOGENOM" id="CLU_006909_2_0_1"/>
<dbReference type="InParanoid" id="Q9LG41"/>
<dbReference type="OMA" id="GQIMHSS"/>
<dbReference type="OrthoDB" id="66881at2759"/>
<dbReference type="Proteomes" id="UP000000763">
    <property type="component" value="Chromosome 1"/>
</dbReference>
<dbReference type="Proteomes" id="UP000059680">
    <property type="component" value="Chromosome 1"/>
</dbReference>
<dbReference type="GO" id="GO:0050660">
    <property type="term" value="F:flavin adenine dinucleotide binding"/>
    <property type="evidence" value="ECO:0000318"/>
    <property type="project" value="GO_Central"/>
</dbReference>
<dbReference type="GO" id="GO:0103075">
    <property type="term" value="F:indole-3-pyruvate monooxygenase activity"/>
    <property type="evidence" value="ECO:0000314"/>
    <property type="project" value="UniProtKB"/>
</dbReference>
<dbReference type="GO" id="GO:0004497">
    <property type="term" value="F:monooxygenase activity"/>
    <property type="evidence" value="ECO:0000318"/>
    <property type="project" value="GO_Central"/>
</dbReference>
<dbReference type="GO" id="GO:0004499">
    <property type="term" value="F:N,N-dimethylaniline monooxygenase activity"/>
    <property type="evidence" value="ECO:0007669"/>
    <property type="project" value="InterPro"/>
</dbReference>
<dbReference type="GO" id="GO:0050661">
    <property type="term" value="F:NADP binding"/>
    <property type="evidence" value="ECO:0007669"/>
    <property type="project" value="InterPro"/>
</dbReference>
<dbReference type="GO" id="GO:0009901">
    <property type="term" value="P:anther dehiscence"/>
    <property type="evidence" value="ECO:0000315"/>
    <property type="project" value="UniProtKB"/>
</dbReference>
<dbReference type="GO" id="GO:0009851">
    <property type="term" value="P:auxin biosynthetic process"/>
    <property type="evidence" value="ECO:0000315"/>
    <property type="project" value="UniProtKB"/>
</dbReference>
<dbReference type="FunFam" id="3.50.50.60:FF:000100">
    <property type="entry name" value="Flavin-containing monooxygenase"/>
    <property type="match status" value="1"/>
</dbReference>
<dbReference type="Gene3D" id="3.50.50.60">
    <property type="entry name" value="FAD/NAD(P)-binding domain"/>
    <property type="match status" value="1"/>
</dbReference>
<dbReference type="InterPro" id="IPR050982">
    <property type="entry name" value="Auxin_biosynth/cation_transpt"/>
</dbReference>
<dbReference type="InterPro" id="IPR036188">
    <property type="entry name" value="FAD/NAD-bd_sf"/>
</dbReference>
<dbReference type="InterPro" id="IPR020946">
    <property type="entry name" value="Flavin_mOase-like"/>
</dbReference>
<dbReference type="PANTHER" id="PTHR43539">
    <property type="entry name" value="FLAVIN-BINDING MONOOXYGENASE-LIKE PROTEIN (AFU_ORTHOLOGUE AFUA_4G09220)"/>
    <property type="match status" value="1"/>
</dbReference>
<dbReference type="PANTHER" id="PTHR43539:SF88">
    <property type="entry name" value="INDOLE-3-PYRUVATE MONOOXYGENASE YUCCA4"/>
    <property type="match status" value="1"/>
</dbReference>
<dbReference type="Pfam" id="PF00743">
    <property type="entry name" value="FMO-like"/>
    <property type="match status" value="1"/>
</dbReference>
<dbReference type="PRINTS" id="PR00368">
    <property type="entry name" value="FADPNR"/>
</dbReference>
<dbReference type="PRINTS" id="PR00411">
    <property type="entry name" value="PNDRDTASEI"/>
</dbReference>
<dbReference type="SUPFAM" id="SSF51905">
    <property type="entry name" value="FAD/NAD(P)-binding domain"/>
    <property type="match status" value="2"/>
</dbReference>
<protein>
    <recommendedName>
        <fullName evidence="4">Indole-3-pyruvate monooxygenase YUCCA4</fullName>
        <shortName evidence="3">OsYUCCA4</shortName>
        <ecNumber evidence="5">1.14.13.168</ecNumber>
    </recommendedName>
    <alternativeName>
        <fullName evidence="4">Flavin-containing monooxygenase YUCCA4</fullName>
    </alternativeName>
</protein>
<evidence type="ECO:0000255" key="1"/>
<evidence type="ECO:0000269" key="2">
    <source>
    </source>
</evidence>
<evidence type="ECO:0000303" key="3">
    <source>
    </source>
</evidence>
<evidence type="ECO:0000305" key="4"/>
<evidence type="ECO:0000305" key="5">
    <source>
    </source>
</evidence>
<evidence type="ECO:0000312" key="6">
    <source>
        <dbReference type="EMBL" id="BAB07916.2"/>
    </source>
</evidence>
<evidence type="ECO:0000312" key="7">
    <source>
        <dbReference type="EMBL" id="BAB32703.1"/>
    </source>
</evidence>
<evidence type="ECO:0000312" key="8">
    <source>
        <dbReference type="EMBL" id="BAF04369.1"/>
    </source>
</evidence>
<organism>
    <name type="scientific">Oryza sativa subsp. japonica</name>
    <name type="common">Rice</name>
    <dbReference type="NCBI Taxonomy" id="39947"/>
    <lineage>
        <taxon>Eukaryota</taxon>
        <taxon>Viridiplantae</taxon>
        <taxon>Streptophyta</taxon>
        <taxon>Embryophyta</taxon>
        <taxon>Tracheophyta</taxon>
        <taxon>Spermatophyta</taxon>
        <taxon>Magnoliopsida</taxon>
        <taxon>Liliopsida</taxon>
        <taxon>Poales</taxon>
        <taxon>Poaceae</taxon>
        <taxon>BOP clade</taxon>
        <taxon>Oryzoideae</taxon>
        <taxon>Oryzeae</taxon>
        <taxon>Oryzinae</taxon>
        <taxon>Oryza</taxon>
        <taxon>Oryza sativa</taxon>
    </lineage>
</organism>
<reference key="1">
    <citation type="journal article" date="2002" name="Nature">
        <title>The genome sequence and structure of rice chromosome 1.</title>
        <authorList>
            <person name="Sasaki T."/>
            <person name="Matsumoto T."/>
            <person name="Yamamoto K."/>
            <person name="Sakata K."/>
            <person name="Baba T."/>
            <person name="Katayose Y."/>
            <person name="Wu J."/>
            <person name="Niimura Y."/>
            <person name="Cheng Z."/>
            <person name="Nagamura Y."/>
            <person name="Antonio B.A."/>
            <person name="Kanamori H."/>
            <person name="Hosokawa S."/>
            <person name="Masukawa M."/>
            <person name="Arikawa K."/>
            <person name="Chiden Y."/>
            <person name="Hayashi M."/>
            <person name="Okamoto M."/>
            <person name="Ando T."/>
            <person name="Aoki H."/>
            <person name="Arita K."/>
            <person name="Hamada M."/>
            <person name="Harada C."/>
            <person name="Hijishita S."/>
            <person name="Honda M."/>
            <person name="Ichikawa Y."/>
            <person name="Idonuma A."/>
            <person name="Iijima M."/>
            <person name="Ikeda M."/>
            <person name="Ikeno M."/>
            <person name="Ito S."/>
            <person name="Ito T."/>
            <person name="Ito Y."/>
            <person name="Ito Y."/>
            <person name="Iwabuchi A."/>
            <person name="Kamiya K."/>
            <person name="Karasawa W."/>
            <person name="Katagiri S."/>
            <person name="Kikuta A."/>
            <person name="Kobayashi N."/>
            <person name="Kono I."/>
            <person name="Machita K."/>
            <person name="Maehara T."/>
            <person name="Mizuno H."/>
            <person name="Mizubayashi T."/>
            <person name="Mukai Y."/>
            <person name="Nagasaki H."/>
            <person name="Nakashima M."/>
            <person name="Nakama Y."/>
            <person name="Nakamichi Y."/>
            <person name="Nakamura M."/>
            <person name="Namiki N."/>
            <person name="Negishi M."/>
            <person name="Ohta I."/>
            <person name="Ono N."/>
            <person name="Saji S."/>
            <person name="Sakai K."/>
            <person name="Shibata M."/>
            <person name="Shimokawa T."/>
            <person name="Shomura A."/>
            <person name="Song J."/>
            <person name="Takazaki Y."/>
            <person name="Terasawa K."/>
            <person name="Tsuji K."/>
            <person name="Waki K."/>
            <person name="Yamagata H."/>
            <person name="Yamane H."/>
            <person name="Yoshiki S."/>
            <person name="Yoshihara R."/>
            <person name="Yukawa K."/>
            <person name="Zhong H."/>
            <person name="Iwama H."/>
            <person name="Endo T."/>
            <person name="Ito H."/>
            <person name="Hahn J.H."/>
            <person name="Kim H.-I."/>
            <person name="Eun M.-Y."/>
            <person name="Yano M."/>
            <person name="Jiang J."/>
            <person name="Gojobori T."/>
        </authorList>
    </citation>
    <scope>NUCLEOTIDE SEQUENCE [LARGE SCALE GENOMIC DNA]</scope>
    <source>
        <strain>cv. Nipponbare</strain>
    </source>
</reference>
<reference key="2">
    <citation type="journal article" date="2005" name="Nature">
        <title>The map-based sequence of the rice genome.</title>
        <authorList>
            <consortium name="International rice genome sequencing project (IRGSP)"/>
        </authorList>
    </citation>
    <scope>NUCLEOTIDE SEQUENCE [LARGE SCALE GENOMIC DNA]</scope>
    <source>
        <strain>cv. Nipponbare</strain>
    </source>
</reference>
<reference key="3">
    <citation type="journal article" date="2008" name="Nucleic Acids Res.">
        <title>The rice annotation project database (RAP-DB): 2008 update.</title>
        <authorList>
            <consortium name="The rice annotation project (RAP)"/>
        </authorList>
    </citation>
    <scope>GENOME REANNOTATION</scope>
    <source>
        <strain>cv. Nipponbare</strain>
    </source>
</reference>
<reference key="4">
    <citation type="journal article" date="2013" name="Rice">
        <title>Improvement of the Oryza sativa Nipponbare reference genome using next generation sequence and optical map data.</title>
        <authorList>
            <person name="Kawahara Y."/>
            <person name="de la Bastide M."/>
            <person name="Hamilton J.P."/>
            <person name="Kanamori H."/>
            <person name="McCombie W.R."/>
            <person name="Ouyang S."/>
            <person name="Schwartz D.C."/>
            <person name="Tanaka T."/>
            <person name="Wu J."/>
            <person name="Zhou S."/>
            <person name="Childs K.L."/>
            <person name="Davidson R.M."/>
            <person name="Lin H."/>
            <person name="Quesada-Ocampo L."/>
            <person name="Vaillancourt B."/>
            <person name="Sakai H."/>
            <person name="Lee S.S."/>
            <person name="Kim J."/>
            <person name="Numa H."/>
            <person name="Itoh T."/>
            <person name="Buell C.R."/>
            <person name="Matsumoto T."/>
        </authorList>
    </citation>
    <scope>GENOME REANNOTATION</scope>
    <source>
        <strain>cv. Nipponbare</strain>
    </source>
</reference>
<reference key="5">
    <citation type="journal article" date="2003" name="Science">
        <title>Collection, mapping, and annotation of over 28,000 cDNA clones from japonica rice.</title>
        <authorList>
            <consortium name="The rice full-length cDNA consortium"/>
        </authorList>
    </citation>
    <scope>NUCLEOTIDE SEQUENCE [LARGE SCALE MRNA]</scope>
    <source>
        <strain>cv. Nipponbare</strain>
    </source>
</reference>
<reference key="6">
    <citation type="journal article" date="2018" name="Nat. Plants">
        <title>OsFTIP7 determines auxin-mediated anther dehiscence in rice.</title>
        <authorList>
            <person name="Song S."/>
            <person name="Chen Y."/>
            <person name="Liu L."/>
            <person name="See Y.H.B."/>
            <person name="Mao C."/>
            <person name="Gan Y."/>
            <person name="Yu H."/>
        </authorList>
    </citation>
    <scope>FUNCTION</scope>
    <scope>CATALYTIC ACTIVITY</scope>
    <scope>DEVELOPMENTAL STAGE</scope>
    <scope>INDUCTION</scope>
</reference>
<sequence length="439" mass="48202">MDCFAETEGKRAHDPLYQRRAAAAATPATGVPVDDVDKVVDVPGAVIVGAGPAGVAVGALLGLRGVAYVVLERCGCIASLWRHRTYDRLCLHLPKRFCELPLRPFPASFPEYPTRDQFLGYLDAYAREFGVEPVFRRAVISAEYDGESWWVYTREVVAAAAGGEQAVLGCTMTVYRSRWLVVATGENAEPVVPEMDGAGRFKGQMMHSSEYRNGDGYAGKKVLVVGCGNSGMEVSLDLCNHNARASMVVRDTVHVLPREILGFSTFGLSMWLLRWLSVQTVDWLVLLLSFLVFGDTARLGIPRPSLGPFELKSVSGKTPVLDVGTLAKIKSGDIKVTPAIQCFQEHGVEFVDGSTEEFDVVILATGYKSNVPYWLKEKEFFSEKDGFPRKGNAWKGQNGLYAVGFSRRGLSGVSMDANNIVQDIVQRLHDMGYERSENN</sequence>
<name>YUC4_ORYSJ</name>
<keyword id="KW-0274">FAD</keyword>
<keyword id="KW-0285">Flavoprotein</keyword>
<keyword id="KW-0503">Monooxygenase</keyword>
<keyword id="KW-0521">NADP</keyword>
<keyword id="KW-0560">Oxidoreductase</keyword>
<keyword id="KW-1185">Reference proteome</keyword>